<name>GLGC_KOCRD</name>
<sequence>MSRQKKVLAIVLAGGEGKRLMPLTEDRAKPAVPFAGGYRLIDFALSNLVNSGYLQIVVLTQYKSHSLDRHLSETWRLSTQLGNYVTSVPAQQRRGKDWFLGSANAIYQSMNLIDDADPDIVVVVGADHVYRMDFADMVEKHIESGAKATVAGVRQPMEMVKSFGVIETDPQDPAKITRFVEKPDTTAPLPDDPHSFLASMGNYVFDRDALVEALRTDNEKADTDHDMGGDIMPYFAERGEAVVYDFTHNDVPGSTDRDRQYWRDVGTLESYFDSHMDLIRPLPVFNLYNYDWPIYTHQIMAPPARTVRGPNGQAGVAFDSIVSPGVLITGGHVGSSVLSPKVKVEHDARVTESVLMQNVQIGAGATVHRCILDKNVVVPPGTTVGLDREQDLARGLTVTESGLTIAPKNYRFER</sequence>
<feature type="chain" id="PRO_1000130489" description="Glucose-1-phosphate adenylyltransferase">
    <location>
        <begin position="1"/>
        <end position="414"/>
    </location>
</feature>
<feature type="binding site" evidence="1">
    <location>
        <position position="164"/>
    </location>
    <ligand>
        <name>alpha-D-glucose 1-phosphate</name>
        <dbReference type="ChEBI" id="CHEBI:58601"/>
    </ligand>
</feature>
<feature type="binding site" evidence="1">
    <location>
        <begin position="181"/>
        <end position="182"/>
    </location>
    <ligand>
        <name>alpha-D-glucose 1-phosphate</name>
        <dbReference type="ChEBI" id="CHEBI:58601"/>
    </ligand>
</feature>
<feature type="binding site" evidence="1">
    <location>
        <position position="199"/>
    </location>
    <ligand>
        <name>alpha-D-glucose 1-phosphate</name>
        <dbReference type="ChEBI" id="CHEBI:58601"/>
    </ligand>
</feature>
<accession>B2GHR6</accession>
<evidence type="ECO:0000255" key="1">
    <source>
        <dbReference type="HAMAP-Rule" id="MF_00624"/>
    </source>
</evidence>
<keyword id="KW-0067">ATP-binding</keyword>
<keyword id="KW-0119">Carbohydrate metabolism</keyword>
<keyword id="KW-0320">Glycogen biosynthesis</keyword>
<keyword id="KW-0321">Glycogen metabolism</keyword>
<keyword id="KW-0547">Nucleotide-binding</keyword>
<keyword id="KW-0548">Nucleotidyltransferase</keyword>
<keyword id="KW-1185">Reference proteome</keyword>
<keyword id="KW-0808">Transferase</keyword>
<reference key="1">
    <citation type="journal article" date="2008" name="J. Bacteriol.">
        <title>Complete genome sequence of the soil actinomycete Kocuria rhizophila.</title>
        <authorList>
            <person name="Takarada H."/>
            <person name="Sekine M."/>
            <person name="Kosugi H."/>
            <person name="Matsuo Y."/>
            <person name="Fujisawa T."/>
            <person name="Omata S."/>
            <person name="Kishi E."/>
            <person name="Shimizu A."/>
            <person name="Tsukatani N."/>
            <person name="Tanikawa S."/>
            <person name="Fujita N."/>
            <person name="Harayama S."/>
        </authorList>
    </citation>
    <scope>NUCLEOTIDE SEQUENCE [LARGE SCALE GENOMIC DNA]</scope>
    <source>
        <strain>ATCC 9341 / DSM 348 / NBRC 103217 / DC2201</strain>
    </source>
</reference>
<protein>
    <recommendedName>
        <fullName evidence="1">Glucose-1-phosphate adenylyltransferase</fullName>
        <ecNumber evidence="1">2.7.7.27</ecNumber>
    </recommendedName>
    <alternativeName>
        <fullName evidence="1">ADP-glucose pyrophosphorylase</fullName>
        <shortName evidence="1">ADPGlc PPase</shortName>
    </alternativeName>
    <alternativeName>
        <fullName evidence="1">ADP-glucose synthase</fullName>
    </alternativeName>
</protein>
<comment type="function">
    <text evidence="1">Involved in the biosynthesis of ADP-glucose, a building block required for the elongation reactions to produce glycogen. Catalyzes the reaction between ATP and alpha-D-glucose 1-phosphate (G1P) to produce pyrophosphate and ADP-Glc.</text>
</comment>
<comment type="catalytic activity">
    <reaction evidence="1">
        <text>alpha-D-glucose 1-phosphate + ATP + H(+) = ADP-alpha-D-glucose + diphosphate</text>
        <dbReference type="Rhea" id="RHEA:12120"/>
        <dbReference type="ChEBI" id="CHEBI:15378"/>
        <dbReference type="ChEBI" id="CHEBI:30616"/>
        <dbReference type="ChEBI" id="CHEBI:33019"/>
        <dbReference type="ChEBI" id="CHEBI:57498"/>
        <dbReference type="ChEBI" id="CHEBI:58601"/>
        <dbReference type="EC" id="2.7.7.27"/>
    </reaction>
</comment>
<comment type="pathway">
    <text evidence="1">Glycan biosynthesis; glycogen biosynthesis.</text>
</comment>
<comment type="subunit">
    <text evidence="1">Homotetramer.</text>
</comment>
<comment type="similarity">
    <text evidence="1">Belongs to the bacterial/plant glucose-1-phosphate adenylyltransferase family.</text>
</comment>
<organism>
    <name type="scientific">Kocuria rhizophila (strain ATCC 9341 / DSM 348 / NBRC 103217 / DC2201)</name>
    <dbReference type="NCBI Taxonomy" id="378753"/>
    <lineage>
        <taxon>Bacteria</taxon>
        <taxon>Bacillati</taxon>
        <taxon>Actinomycetota</taxon>
        <taxon>Actinomycetes</taxon>
        <taxon>Micrococcales</taxon>
        <taxon>Micrococcaceae</taxon>
        <taxon>Kocuria</taxon>
    </lineage>
</organism>
<proteinExistence type="inferred from homology"/>
<gene>
    <name evidence="1" type="primary">glgC</name>
    <name type="ordered locus">KRH_12720</name>
</gene>
<dbReference type="EC" id="2.7.7.27" evidence="1"/>
<dbReference type="EMBL" id="AP009152">
    <property type="protein sequence ID" value="BAG29619.1"/>
    <property type="molecule type" value="Genomic_DNA"/>
</dbReference>
<dbReference type="RefSeq" id="WP_012398340.1">
    <property type="nucleotide sequence ID" value="NC_010617.1"/>
</dbReference>
<dbReference type="SMR" id="B2GHR6"/>
<dbReference type="STRING" id="378753.KRH_12720"/>
<dbReference type="KEGG" id="krh:KRH_12720"/>
<dbReference type="eggNOG" id="COG0448">
    <property type="taxonomic scope" value="Bacteria"/>
</dbReference>
<dbReference type="HOGENOM" id="CLU_029499_14_1_11"/>
<dbReference type="OrthoDB" id="9801810at2"/>
<dbReference type="UniPathway" id="UPA00164"/>
<dbReference type="Proteomes" id="UP000008838">
    <property type="component" value="Chromosome"/>
</dbReference>
<dbReference type="GO" id="GO:0005524">
    <property type="term" value="F:ATP binding"/>
    <property type="evidence" value="ECO:0007669"/>
    <property type="project" value="UniProtKB-KW"/>
</dbReference>
<dbReference type="GO" id="GO:0008878">
    <property type="term" value="F:glucose-1-phosphate adenylyltransferase activity"/>
    <property type="evidence" value="ECO:0007669"/>
    <property type="project" value="UniProtKB-UniRule"/>
</dbReference>
<dbReference type="GO" id="GO:0005978">
    <property type="term" value="P:glycogen biosynthetic process"/>
    <property type="evidence" value="ECO:0007669"/>
    <property type="project" value="UniProtKB-UniRule"/>
</dbReference>
<dbReference type="CDD" id="cd02508">
    <property type="entry name" value="ADP_Glucose_PP"/>
    <property type="match status" value="1"/>
</dbReference>
<dbReference type="CDD" id="cd04651">
    <property type="entry name" value="LbH_G1P_AT_C"/>
    <property type="match status" value="1"/>
</dbReference>
<dbReference type="Gene3D" id="2.160.10.10">
    <property type="entry name" value="Hexapeptide repeat proteins"/>
    <property type="match status" value="1"/>
</dbReference>
<dbReference type="Gene3D" id="3.90.550.10">
    <property type="entry name" value="Spore Coat Polysaccharide Biosynthesis Protein SpsA, Chain A"/>
    <property type="match status" value="1"/>
</dbReference>
<dbReference type="HAMAP" id="MF_00624">
    <property type="entry name" value="GlgC"/>
    <property type="match status" value="1"/>
</dbReference>
<dbReference type="InterPro" id="IPR011831">
    <property type="entry name" value="ADP-Glc_PPase"/>
</dbReference>
<dbReference type="InterPro" id="IPR005836">
    <property type="entry name" value="ADP_Glu_pyroP_CS"/>
</dbReference>
<dbReference type="InterPro" id="IPR023049">
    <property type="entry name" value="GlgC_bac"/>
</dbReference>
<dbReference type="InterPro" id="IPR056818">
    <property type="entry name" value="GlmU/GlgC-like_hexapep"/>
</dbReference>
<dbReference type="InterPro" id="IPR005835">
    <property type="entry name" value="NTP_transferase_dom"/>
</dbReference>
<dbReference type="InterPro" id="IPR029044">
    <property type="entry name" value="Nucleotide-diphossugar_trans"/>
</dbReference>
<dbReference type="InterPro" id="IPR011004">
    <property type="entry name" value="Trimer_LpxA-like_sf"/>
</dbReference>
<dbReference type="NCBIfam" id="TIGR02091">
    <property type="entry name" value="glgC"/>
    <property type="match status" value="1"/>
</dbReference>
<dbReference type="NCBIfam" id="NF001947">
    <property type="entry name" value="PRK00725.1"/>
    <property type="match status" value="1"/>
</dbReference>
<dbReference type="NCBIfam" id="NF002023">
    <property type="entry name" value="PRK00844.1"/>
    <property type="match status" value="1"/>
</dbReference>
<dbReference type="PANTHER" id="PTHR43523:SF2">
    <property type="entry name" value="GLUCOSE-1-PHOSPHATE ADENYLYLTRANSFERASE"/>
    <property type="match status" value="1"/>
</dbReference>
<dbReference type="PANTHER" id="PTHR43523">
    <property type="entry name" value="GLUCOSE-1-PHOSPHATE ADENYLYLTRANSFERASE-RELATED"/>
    <property type="match status" value="1"/>
</dbReference>
<dbReference type="Pfam" id="PF24894">
    <property type="entry name" value="Hexapep_GlmU"/>
    <property type="match status" value="1"/>
</dbReference>
<dbReference type="Pfam" id="PF00483">
    <property type="entry name" value="NTP_transferase"/>
    <property type="match status" value="1"/>
</dbReference>
<dbReference type="SUPFAM" id="SSF53448">
    <property type="entry name" value="Nucleotide-diphospho-sugar transferases"/>
    <property type="match status" value="1"/>
</dbReference>
<dbReference type="SUPFAM" id="SSF51161">
    <property type="entry name" value="Trimeric LpxA-like enzymes"/>
    <property type="match status" value="1"/>
</dbReference>
<dbReference type="PROSITE" id="PS00808">
    <property type="entry name" value="ADP_GLC_PYROPHOSPH_1"/>
    <property type="match status" value="1"/>
</dbReference>
<dbReference type="PROSITE" id="PS00809">
    <property type="entry name" value="ADP_GLC_PYROPHOSPH_2"/>
    <property type="match status" value="1"/>
</dbReference>
<dbReference type="PROSITE" id="PS00810">
    <property type="entry name" value="ADP_GLC_PYROPHOSPH_3"/>
    <property type="match status" value="1"/>
</dbReference>